<accession>A7X1H8</accession>
<proteinExistence type="inferred from homology"/>
<gene>
    <name evidence="1" type="primary">rlmN</name>
    <name type="ordered locus">SAHV_1208</name>
</gene>
<reference key="1">
    <citation type="journal article" date="2008" name="Antimicrob. Agents Chemother.">
        <title>Mutated response regulator graR is responsible for phenotypic conversion of Staphylococcus aureus from heterogeneous vancomycin-intermediate resistance to vancomycin-intermediate resistance.</title>
        <authorList>
            <person name="Neoh H.-M."/>
            <person name="Cui L."/>
            <person name="Yuzawa H."/>
            <person name="Takeuchi F."/>
            <person name="Matsuo M."/>
            <person name="Hiramatsu K."/>
        </authorList>
    </citation>
    <scope>NUCLEOTIDE SEQUENCE [LARGE SCALE GENOMIC DNA]</scope>
    <source>
        <strain>Mu3 / ATCC 700698</strain>
    </source>
</reference>
<evidence type="ECO:0000255" key="1">
    <source>
        <dbReference type="HAMAP-Rule" id="MF_01849"/>
    </source>
</evidence>
<evidence type="ECO:0000255" key="2">
    <source>
        <dbReference type="PROSITE-ProRule" id="PRU01266"/>
    </source>
</evidence>
<dbReference type="EC" id="2.1.1.192" evidence="1"/>
<dbReference type="EMBL" id="AP009324">
    <property type="protein sequence ID" value="BAF78091.1"/>
    <property type="molecule type" value="Genomic_DNA"/>
</dbReference>
<dbReference type="RefSeq" id="WP_000626897.1">
    <property type="nucleotide sequence ID" value="NZ_CTYB01000004.1"/>
</dbReference>
<dbReference type="SMR" id="A7X1H8"/>
<dbReference type="KEGG" id="saw:SAHV_1208"/>
<dbReference type="HOGENOM" id="CLU_029101_0_1_9"/>
<dbReference type="GO" id="GO:0005737">
    <property type="term" value="C:cytoplasm"/>
    <property type="evidence" value="ECO:0007669"/>
    <property type="project" value="UniProtKB-SubCell"/>
</dbReference>
<dbReference type="GO" id="GO:0051539">
    <property type="term" value="F:4 iron, 4 sulfur cluster binding"/>
    <property type="evidence" value="ECO:0007669"/>
    <property type="project" value="UniProtKB-UniRule"/>
</dbReference>
<dbReference type="GO" id="GO:0046872">
    <property type="term" value="F:metal ion binding"/>
    <property type="evidence" value="ECO:0007669"/>
    <property type="project" value="UniProtKB-KW"/>
</dbReference>
<dbReference type="GO" id="GO:0070040">
    <property type="term" value="F:rRNA (adenine(2503)-C2-)-methyltransferase activity"/>
    <property type="evidence" value="ECO:0007669"/>
    <property type="project" value="UniProtKB-UniRule"/>
</dbReference>
<dbReference type="GO" id="GO:0019843">
    <property type="term" value="F:rRNA binding"/>
    <property type="evidence" value="ECO:0007669"/>
    <property type="project" value="UniProtKB-UniRule"/>
</dbReference>
<dbReference type="GO" id="GO:0002935">
    <property type="term" value="F:tRNA (adenine(37)-C2)-methyltransferase activity"/>
    <property type="evidence" value="ECO:0007669"/>
    <property type="project" value="UniProtKB-UniRule"/>
</dbReference>
<dbReference type="GO" id="GO:0000049">
    <property type="term" value="F:tRNA binding"/>
    <property type="evidence" value="ECO:0007669"/>
    <property type="project" value="UniProtKB-UniRule"/>
</dbReference>
<dbReference type="GO" id="GO:0046677">
    <property type="term" value="P:response to antibiotic"/>
    <property type="evidence" value="ECO:0007669"/>
    <property type="project" value="UniProtKB-KW"/>
</dbReference>
<dbReference type="GO" id="GO:0070475">
    <property type="term" value="P:rRNA base methylation"/>
    <property type="evidence" value="ECO:0007669"/>
    <property type="project" value="UniProtKB-UniRule"/>
</dbReference>
<dbReference type="GO" id="GO:0030488">
    <property type="term" value="P:tRNA methylation"/>
    <property type="evidence" value="ECO:0007669"/>
    <property type="project" value="UniProtKB-UniRule"/>
</dbReference>
<dbReference type="CDD" id="cd01335">
    <property type="entry name" value="Radical_SAM"/>
    <property type="match status" value="1"/>
</dbReference>
<dbReference type="FunFam" id="1.10.150.530:FF:000002">
    <property type="entry name" value="Probable dual-specificity RNA methyltransferase RlmN"/>
    <property type="match status" value="1"/>
</dbReference>
<dbReference type="FunFam" id="3.20.20.70:FF:000014">
    <property type="entry name" value="Probable dual-specificity RNA methyltransferase RlmN"/>
    <property type="match status" value="1"/>
</dbReference>
<dbReference type="Gene3D" id="1.10.150.530">
    <property type="match status" value="1"/>
</dbReference>
<dbReference type="Gene3D" id="3.20.20.70">
    <property type="entry name" value="Aldolase class I"/>
    <property type="match status" value="1"/>
</dbReference>
<dbReference type="HAMAP" id="MF_01849">
    <property type="entry name" value="RNA_methyltr_RlmN"/>
    <property type="match status" value="1"/>
</dbReference>
<dbReference type="InterPro" id="IPR013785">
    <property type="entry name" value="Aldolase_TIM"/>
</dbReference>
<dbReference type="InterPro" id="IPR040072">
    <property type="entry name" value="Methyltransferase_A"/>
</dbReference>
<dbReference type="InterPro" id="IPR048641">
    <property type="entry name" value="RlmN_N"/>
</dbReference>
<dbReference type="InterPro" id="IPR027492">
    <property type="entry name" value="RNA_MTrfase_RlmN"/>
</dbReference>
<dbReference type="InterPro" id="IPR004383">
    <property type="entry name" value="rRNA_lsu_MTrfase_RlmN/Cfr"/>
</dbReference>
<dbReference type="InterPro" id="IPR007197">
    <property type="entry name" value="rSAM"/>
</dbReference>
<dbReference type="NCBIfam" id="TIGR00048">
    <property type="entry name" value="rRNA_mod_RlmN"/>
    <property type="match status" value="1"/>
</dbReference>
<dbReference type="PANTHER" id="PTHR30544">
    <property type="entry name" value="23S RRNA METHYLTRANSFERASE"/>
    <property type="match status" value="1"/>
</dbReference>
<dbReference type="PANTHER" id="PTHR30544:SF5">
    <property type="entry name" value="RADICAL SAM CORE DOMAIN-CONTAINING PROTEIN"/>
    <property type="match status" value="1"/>
</dbReference>
<dbReference type="Pfam" id="PF04055">
    <property type="entry name" value="Radical_SAM"/>
    <property type="match status" value="1"/>
</dbReference>
<dbReference type="Pfam" id="PF21016">
    <property type="entry name" value="RlmN_N"/>
    <property type="match status" value="1"/>
</dbReference>
<dbReference type="PIRSF" id="PIRSF006004">
    <property type="entry name" value="CHP00048"/>
    <property type="match status" value="1"/>
</dbReference>
<dbReference type="SFLD" id="SFLDF00275">
    <property type="entry name" value="adenosine_C2_methyltransferase"/>
    <property type="match status" value="1"/>
</dbReference>
<dbReference type="SFLD" id="SFLDG01062">
    <property type="entry name" value="methyltransferase_(Class_A)"/>
    <property type="match status" value="1"/>
</dbReference>
<dbReference type="SUPFAM" id="SSF102114">
    <property type="entry name" value="Radical SAM enzymes"/>
    <property type="match status" value="1"/>
</dbReference>
<dbReference type="PROSITE" id="PS51918">
    <property type="entry name" value="RADICAL_SAM"/>
    <property type="match status" value="1"/>
</dbReference>
<comment type="function">
    <text evidence="1">Specifically methylates position 2 of adenine 2503 in 23S rRNA and position 2 of adenine 37 in tRNAs. Confers resistance to some classes of antibiotics.</text>
</comment>
<comment type="catalytic activity">
    <reaction evidence="1">
        <text>adenosine(2503) in 23S rRNA + 2 reduced [2Fe-2S]-[ferredoxin] + 2 S-adenosyl-L-methionine = 2-methyladenosine(2503) in 23S rRNA + 5'-deoxyadenosine + L-methionine + 2 oxidized [2Fe-2S]-[ferredoxin] + S-adenosyl-L-homocysteine</text>
        <dbReference type="Rhea" id="RHEA:42916"/>
        <dbReference type="Rhea" id="RHEA-COMP:10000"/>
        <dbReference type="Rhea" id="RHEA-COMP:10001"/>
        <dbReference type="Rhea" id="RHEA-COMP:10152"/>
        <dbReference type="Rhea" id="RHEA-COMP:10282"/>
        <dbReference type="ChEBI" id="CHEBI:17319"/>
        <dbReference type="ChEBI" id="CHEBI:33737"/>
        <dbReference type="ChEBI" id="CHEBI:33738"/>
        <dbReference type="ChEBI" id="CHEBI:57844"/>
        <dbReference type="ChEBI" id="CHEBI:57856"/>
        <dbReference type="ChEBI" id="CHEBI:59789"/>
        <dbReference type="ChEBI" id="CHEBI:74411"/>
        <dbReference type="ChEBI" id="CHEBI:74497"/>
        <dbReference type="EC" id="2.1.1.192"/>
    </reaction>
</comment>
<comment type="catalytic activity">
    <reaction evidence="1">
        <text>adenosine(37) in tRNA + 2 reduced [2Fe-2S]-[ferredoxin] + 2 S-adenosyl-L-methionine = 2-methyladenosine(37) in tRNA + 5'-deoxyadenosine + L-methionine + 2 oxidized [2Fe-2S]-[ferredoxin] + S-adenosyl-L-homocysteine</text>
        <dbReference type="Rhea" id="RHEA:43332"/>
        <dbReference type="Rhea" id="RHEA-COMP:10000"/>
        <dbReference type="Rhea" id="RHEA-COMP:10001"/>
        <dbReference type="Rhea" id="RHEA-COMP:10162"/>
        <dbReference type="Rhea" id="RHEA-COMP:10485"/>
        <dbReference type="ChEBI" id="CHEBI:17319"/>
        <dbReference type="ChEBI" id="CHEBI:33737"/>
        <dbReference type="ChEBI" id="CHEBI:33738"/>
        <dbReference type="ChEBI" id="CHEBI:57844"/>
        <dbReference type="ChEBI" id="CHEBI:57856"/>
        <dbReference type="ChEBI" id="CHEBI:59789"/>
        <dbReference type="ChEBI" id="CHEBI:74411"/>
        <dbReference type="ChEBI" id="CHEBI:74497"/>
        <dbReference type="EC" id="2.1.1.192"/>
    </reaction>
</comment>
<comment type="cofactor">
    <cofactor evidence="1">
        <name>[4Fe-4S] cluster</name>
        <dbReference type="ChEBI" id="CHEBI:49883"/>
    </cofactor>
    <text evidence="1">Binds 1 [4Fe-4S] cluster. The cluster is coordinated with 3 cysteines and an exchangeable S-adenosyl-L-methionine.</text>
</comment>
<comment type="subcellular location">
    <subcellularLocation>
        <location evidence="1">Cytoplasm</location>
    </subcellularLocation>
</comment>
<comment type="miscellaneous">
    <text evidence="1">Reaction proceeds by a ping-pong mechanism involving intermediate methylation of a conserved cysteine residue.</text>
</comment>
<comment type="similarity">
    <text evidence="1">Belongs to the radical SAM superfamily. RlmN family.</text>
</comment>
<protein>
    <recommendedName>
        <fullName evidence="1">Probable dual-specificity RNA methyltransferase RlmN</fullName>
        <ecNumber evidence="1">2.1.1.192</ecNumber>
    </recommendedName>
    <alternativeName>
        <fullName evidence="1">23S rRNA (adenine(2503)-C(2))-methyltransferase</fullName>
    </alternativeName>
    <alternativeName>
        <fullName evidence="1">23S rRNA m2A2503 methyltransferase</fullName>
    </alternativeName>
    <alternativeName>
        <fullName evidence="1">Ribosomal RNA large subunit methyltransferase N</fullName>
    </alternativeName>
    <alternativeName>
        <fullName evidence="1">tRNA (adenine(37)-C(2))-methyltransferase</fullName>
    </alternativeName>
    <alternativeName>
        <fullName evidence="1">tRNA m2A37 methyltransferase</fullName>
    </alternativeName>
</protein>
<keyword id="KW-0004">4Fe-4S</keyword>
<keyword id="KW-0046">Antibiotic resistance</keyword>
<keyword id="KW-0963">Cytoplasm</keyword>
<keyword id="KW-1015">Disulfide bond</keyword>
<keyword id="KW-0408">Iron</keyword>
<keyword id="KW-0411">Iron-sulfur</keyword>
<keyword id="KW-0479">Metal-binding</keyword>
<keyword id="KW-0489">Methyltransferase</keyword>
<keyword id="KW-0698">rRNA processing</keyword>
<keyword id="KW-0949">S-adenosyl-L-methionine</keyword>
<keyword id="KW-0808">Transferase</keyword>
<keyword id="KW-0819">tRNA processing</keyword>
<name>RLMN_STAA1</name>
<organism>
    <name type="scientific">Staphylococcus aureus (strain Mu3 / ATCC 700698)</name>
    <dbReference type="NCBI Taxonomy" id="418127"/>
    <lineage>
        <taxon>Bacteria</taxon>
        <taxon>Bacillati</taxon>
        <taxon>Bacillota</taxon>
        <taxon>Bacilli</taxon>
        <taxon>Bacillales</taxon>
        <taxon>Staphylococcaceae</taxon>
        <taxon>Staphylococcus</taxon>
    </lineage>
</organism>
<sequence length="364" mass="41905">MITAEKKKKNKFLPNFDKQSIYSLRFDEMQNWLVEQGQQKFRAKQIFEWLYQKRVDSIDEMTNLSKDLRQLLKDNFTVTTLTTVVKQESKDGTIKFLFELQDGYTIETVLMRHDYGNSVCVTTQVGCRIGCTFCASTLGGLKRNLEAGEIVSQVLTVQKALDATEERVSQIVIMGIGEPFENYDEMMDFLRIVNDDNSLNIGARHITVSTSGIIPRIYDFADEDIQINFAVSLHAAKDEVRSRLMPINRAYNVEKLIEAIQYYQEKTNRRVTFEYGLFGGVNDQLEHARELAHLIKGLNCHVNLIPVNHVPERNYVKTAKNDIFKFEKELKRLGINATIRREQGSDIDAACGQLRAKERQVETR</sequence>
<feature type="chain" id="PRO_0000350433" description="Probable dual-specificity RNA methyltransferase RlmN">
    <location>
        <begin position="1"/>
        <end position="364"/>
    </location>
</feature>
<feature type="domain" description="Radical SAM core" evidence="2">
    <location>
        <begin position="113"/>
        <end position="346"/>
    </location>
</feature>
<feature type="active site" description="Proton acceptor" evidence="1">
    <location>
        <position position="107"/>
    </location>
</feature>
<feature type="active site" description="S-methylcysteine intermediate" evidence="1">
    <location>
        <position position="351"/>
    </location>
</feature>
<feature type="binding site" evidence="1">
    <location>
        <position position="127"/>
    </location>
    <ligand>
        <name>[4Fe-4S] cluster</name>
        <dbReference type="ChEBI" id="CHEBI:49883"/>
        <note>4Fe-4S-S-AdoMet</note>
    </ligand>
</feature>
<feature type="binding site" evidence="1">
    <location>
        <position position="131"/>
    </location>
    <ligand>
        <name>[4Fe-4S] cluster</name>
        <dbReference type="ChEBI" id="CHEBI:49883"/>
        <note>4Fe-4S-S-AdoMet</note>
    </ligand>
</feature>
<feature type="binding site" evidence="1">
    <location>
        <position position="134"/>
    </location>
    <ligand>
        <name>[4Fe-4S] cluster</name>
        <dbReference type="ChEBI" id="CHEBI:49883"/>
        <note>4Fe-4S-S-AdoMet</note>
    </ligand>
</feature>
<feature type="binding site" evidence="1">
    <location>
        <begin position="177"/>
        <end position="178"/>
    </location>
    <ligand>
        <name>S-adenosyl-L-methionine</name>
        <dbReference type="ChEBI" id="CHEBI:59789"/>
    </ligand>
</feature>
<feature type="binding site" evidence="1">
    <location>
        <position position="209"/>
    </location>
    <ligand>
        <name>S-adenosyl-L-methionine</name>
        <dbReference type="ChEBI" id="CHEBI:59789"/>
    </ligand>
</feature>
<feature type="binding site" evidence="1">
    <location>
        <begin position="232"/>
        <end position="234"/>
    </location>
    <ligand>
        <name>S-adenosyl-L-methionine</name>
        <dbReference type="ChEBI" id="CHEBI:59789"/>
    </ligand>
</feature>
<feature type="binding site" evidence="1">
    <location>
        <position position="308"/>
    </location>
    <ligand>
        <name>S-adenosyl-L-methionine</name>
        <dbReference type="ChEBI" id="CHEBI:59789"/>
    </ligand>
</feature>
<feature type="disulfide bond" description="(transient)" evidence="1">
    <location>
        <begin position="120"/>
        <end position="351"/>
    </location>
</feature>